<name>SYY_ZYMMO</name>
<dbReference type="EC" id="6.1.1.1" evidence="1"/>
<dbReference type="EMBL" id="AE008692">
    <property type="protein sequence ID" value="AAV90267.1"/>
    <property type="molecule type" value="Genomic_DNA"/>
</dbReference>
<dbReference type="RefSeq" id="WP_011241393.1">
    <property type="nucleotide sequence ID" value="NZ_CP035711.1"/>
</dbReference>
<dbReference type="SMR" id="Q5NLZ3"/>
<dbReference type="STRING" id="264203.ZMO1643"/>
<dbReference type="KEGG" id="zmo:ZMO1643"/>
<dbReference type="eggNOG" id="COG0162">
    <property type="taxonomic scope" value="Bacteria"/>
</dbReference>
<dbReference type="HOGENOM" id="CLU_024003_0_3_5"/>
<dbReference type="Proteomes" id="UP000001173">
    <property type="component" value="Chromosome"/>
</dbReference>
<dbReference type="GO" id="GO:0005829">
    <property type="term" value="C:cytosol"/>
    <property type="evidence" value="ECO:0007669"/>
    <property type="project" value="TreeGrafter"/>
</dbReference>
<dbReference type="GO" id="GO:0005524">
    <property type="term" value="F:ATP binding"/>
    <property type="evidence" value="ECO:0007669"/>
    <property type="project" value="UniProtKB-UniRule"/>
</dbReference>
<dbReference type="GO" id="GO:0003723">
    <property type="term" value="F:RNA binding"/>
    <property type="evidence" value="ECO:0007669"/>
    <property type="project" value="UniProtKB-KW"/>
</dbReference>
<dbReference type="GO" id="GO:0004831">
    <property type="term" value="F:tyrosine-tRNA ligase activity"/>
    <property type="evidence" value="ECO:0007669"/>
    <property type="project" value="UniProtKB-UniRule"/>
</dbReference>
<dbReference type="GO" id="GO:0006437">
    <property type="term" value="P:tyrosyl-tRNA aminoacylation"/>
    <property type="evidence" value="ECO:0007669"/>
    <property type="project" value="UniProtKB-UniRule"/>
</dbReference>
<dbReference type="CDD" id="cd00165">
    <property type="entry name" value="S4"/>
    <property type="match status" value="1"/>
</dbReference>
<dbReference type="CDD" id="cd00805">
    <property type="entry name" value="TyrRS_core"/>
    <property type="match status" value="1"/>
</dbReference>
<dbReference type="FunFam" id="1.10.240.10:FF:000001">
    <property type="entry name" value="Tyrosine--tRNA ligase"/>
    <property type="match status" value="1"/>
</dbReference>
<dbReference type="FunFam" id="3.40.50.620:FF:000008">
    <property type="entry name" value="Tyrosine--tRNA ligase"/>
    <property type="match status" value="1"/>
</dbReference>
<dbReference type="Gene3D" id="3.40.50.620">
    <property type="entry name" value="HUPs"/>
    <property type="match status" value="1"/>
</dbReference>
<dbReference type="Gene3D" id="3.10.290.10">
    <property type="entry name" value="RNA-binding S4 domain"/>
    <property type="match status" value="1"/>
</dbReference>
<dbReference type="Gene3D" id="1.10.240.10">
    <property type="entry name" value="Tyrosyl-Transfer RNA Synthetase"/>
    <property type="match status" value="1"/>
</dbReference>
<dbReference type="HAMAP" id="MF_02006">
    <property type="entry name" value="Tyr_tRNA_synth_type1"/>
    <property type="match status" value="1"/>
</dbReference>
<dbReference type="InterPro" id="IPR002305">
    <property type="entry name" value="aa-tRNA-synth_Ic"/>
</dbReference>
<dbReference type="InterPro" id="IPR014729">
    <property type="entry name" value="Rossmann-like_a/b/a_fold"/>
</dbReference>
<dbReference type="InterPro" id="IPR036986">
    <property type="entry name" value="S4_RNA-bd_sf"/>
</dbReference>
<dbReference type="InterPro" id="IPR054608">
    <property type="entry name" value="SYY-like_C"/>
</dbReference>
<dbReference type="InterPro" id="IPR002307">
    <property type="entry name" value="Tyr-tRNA-ligase"/>
</dbReference>
<dbReference type="InterPro" id="IPR024088">
    <property type="entry name" value="Tyr-tRNA-ligase_bac-type"/>
</dbReference>
<dbReference type="InterPro" id="IPR024107">
    <property type="entry name" value="Tyr-tRNA-ligase_bac_1"/>
</dbReference>
<dbReference type="NCBIfam" id="TIGR00234">
    <property type="entry name" value="tyrS"/>
    <property type="match status" value="1"/>
</dbReference>
<dbReference type="PANTHER" id="PTHR11766:SF0">
    <property type="entry name" value="TYROSINE--TRNA LIGASE, MITOCHONDRIAL"/>
    <property type="match status" value="1"/>
</dbReference>
<dbReference type="PANTHER" id="PTHR11766">
    <property type="entry name" value="TYROSYL-TRNA SYNTHETASE"/>
    <property type="match status" value="1"/>
</dbReference>
<dbReference type="Pfam" id="PF22421">
    <property type="entry name" value="SYY_C-terminal"/>
    <property type="match status" value="1"/>
</dbReference>
<dbReference type="Pfam" id="PF00579">
    <property type="entry name" value="tRNA-synt_1b"/>
    <property type="match status" value="1"/>
</dbReference>
<dbReference type="PRINTS" id="PR01040">
    <property type="entry name" value="TRNASYNTHTYR"/>
</dbReference>
<dbReference type="SUPFAM" id="SSF55174">
    <property type="entry name" value="Alpha-L RNA-binding motif"/>
    <property type="match status" value="1"/>
</dbReference>
<dbReference type="SUPFAM" id="SSF52374">
    <property type="entry name" value="Nucleotidylyl transferase"/>
    <property type="match status" value="1"/>
</dbReference>
<dbReference type="PROSITE" id="PS50889">
    <property type="entry name" value="S4"/>
    <property type="match status" value="1"/>
</dbReference>
<organism>
    <name type="scientific">Zymomonas mobilis subsp. mobilis (strain ATCC 31821 / ZM4 / CP4)</name>
    <dbReference type="NCBI Taxonomy" id="264203"/>
    <lineage>
        <taxon>Bacteria</taxon>
        <taxon>Pseudomonadati</taxon>
        <taxon>Pseudomonadota</taxon>
        <taxon>Alphaproteobacteria</taxon>
        <taxon>Sphingomonadales</taxon>
        <taxon>Zymomonadaceae</taxon>
        <taxon>Zymomonas</taxon>
    </lineage>
</organism>
<keyword id="KW-0030">Aminoacyl-tRNA synthetase</keyword>
<keyword id="KW-0067">ATP-binding</keyword>
<keyword id="KW-0963">Cytoplasm</keyword>
<keyword id="KW-0436">Ligase</keyword>
<keyword id="KW-0547">Nucleotide-binding</keyword>
<keyword id="KW-0648">Protein biosynthesis</keyword>
<keyword id="KW-1185">Reference proteome</keyword>
<keyword id="KW-0694">RNA-binding</keyword>
<proteinExistence type="inferred from homology"/>
<protein>
    <recommendedName>
        <fullName evidence="1">Tyrosine--tRNA ligase</fullName>
        <ecNumber evidence="1">6.1.1.1</ecNumber>
    </recommendedName>
    <alternativeName>
        <fullName evidence="1">Tyrosyl-tRNA synthetase</fullName>
        <shortName evidence="1">TyrRS</shortName>
    </alternativeName>
</protein>
<evidence type="ECO:0000255" key="1">
    <source>
        <dbReference type="HAMAP-Rule" id="MF_02006"/>
    </source>
</evidence>
<accession>Q5NLZ3</accession>
<comment type="function">
    <text evidence="1">Catalyzes the attachment of tyrosine to tRNA(Tyr) in a two-step reaction: tyrosine is first activated by ATP to form Tyr-AMP and then transferred to the acceptor end of tRNA(Tyr).</text>
</comment>
<comment type="catalytic activity">
    <reaction evidence="1">
        <text>tRNA(Tyr) + L-tyrosine + ATP = L-tyrosyl-tRNA(Tyr) + AMP + diphosphate + H(+)</text>
        <dbReference type="Rhea" id="RHEA:10220"/>
        <dbReference type="Rhea" id="RHEA-COMP:9706"/>
        <dbReference type="Rhea" id="RHEA-COMP:9707"/>
        <dbReference type="ChEBI" id="CHEBI:15378"/>
        <dbReference type="ChEBI" id="CHEBI:30616"/>
        <dbReference type="ChEBI" id="CHEBI:33019"/>
        <dbReference type="ChEBI" id="CHEBI:58315"/>
        <dbReference type="ChEBI" id="CHEBI:78442"/>
        <dbReference type="ChEBI" id="CHEBI:78536"/>
        <dbReference type="ChEBI" id="CHEBI:456215"/>
        <dbReference type="EC" id="6.1.1.1"/>
    </reaction>
</comment>
<comment type="subunit">
    <text evidence="1">Homodimer.</text>
</comment>
<comment type="subcellular location">
    <subcellularLocation>
        <location evidence="1">Cytoplasm</location>
    </subcellularLocation>
</comment>
<comment type="similarity">
    <text evidence="1">Belongs to the class-I aminoacyl-tRNA synthetase family. TyrS type 1 subfamily.</text>
</comment>
<feature type="chain" id="PRO_0000234818" description="Tyrosine--tRNA ligase">
    <location>
        <begin position="1"/>
        <end position="409"/>
    </location>
</feature>
<feature type="domain" description="S4 RNA-binding" evidence="1">
    <location>
        <begin position="346"/>
        <end position="408"/>
    </location>
</feature>
<feature type="short sequence motif" description="'HIGH' region">
    <location>
        <begin position="44"/>
        <end position="53"/>
    </location>
</feature>
<feature type="short sequence motif" description="'KMSKS' region">
    <location>
        <begin position="236"/>
        <end position="240"/>
    </location>
</feature>
<feature type="binding site" evidence="1">
    <location>
        <position position="39"/>
    </location>
    <ligand>
        <name>L-tyrosine</name>
        <dbReference type="ChEBI" id="CHEBI:58315"/>
    </ligand>
</feature>
<feature type="binding site" evidence="1">
    <location>
        <position position="176"/>
    </location>
    <ligand>
        <name>L-tyrosine</name>
        <dbReference type="ChEBI" id="CHEBI:58315"/>
    </ligand>
</feature>
<feature type="binding site" evidence="1">
    <location>
        <position position="180"/>
    </location>
    <ligand>
        <name>L-tyrosine</name>
        <dbReference type="ChEBI" id="CHEBI:58315"/>
    </ligand>
</feature>
<feature type="binding site" evidence="1">
    <location>
        <position position="239"/>
    </location>
    <ligand>
        <name>ATP</name>
        <dbReference type="ChEBI" id="CHEBI:30616"/>
    </ligand>
</feature>
<sequence length="409" mass="45014">MTQFRSDFLRLLETRGYIHQITDAKSLDEKASQSVIAAYIGFDPTAASLHVGSLLQIMMLRRLQQAGHKPIVLMGGGTGKIGDPSFKDEARKLLDEDTIKANIASIKRVFEHFLHFGDGENDAVMVDNAEWLDRLEYIPFLRDVGQHFSVNRMLSFDSVKLRLDREQSLSFLEFNYMILQAYDFLELSRRFGVCLQLGGSDQWGNIVNGIELARRMDGKEVFGLTSPLMTTADGVKMGKTVGGAVWLNGDMCSPYDYWQFWRNTHDADVERFLKLFTDLPLDEIARLAALEGSEINEAKKILANEATKLAHGEKAAEEAAATAKKTFEEGAAGDALPVMKVSDSSISLVDALVGLGLVASKAEARRMIRGGGARINGEKALDEKAVIEVTAENIRISAGKKAHGVIQAG</sequence>
<reference key="1">
    <citation type="journal article" date="2005" name="Nat. Biotechnol.">
        <title>The genome sequence of the ethanologenic bacterium Zymomonas mobilis ZM4.</title>
        <authorList>
            <person name="Seo J.-S."/>
            <person name="Chong H."/>
            <person name="Park H.S."/>
            <person name="Yoon K.-O."/>
            <person name="Jung C."/>
            <person name="Kim J.J."/>
            <person name="Hong J.H."/>
            <person name="Kim H."/>
            <person name="Kim J.-H."/>
            <person name="Kil J.-I."/>
            <person name="Park C.J."/>
            <person name="Oh H.-M."/>
            <person name="Lee J.-S."/>
            <person name="Jin S.-J."/>
            <person name="Um H.-W."/>
            <person name="Lee H.-J."/>
            <person name="Oh S.-J."/>
            <person name="Kim J.Y."/>
            <person name="Kang H.L."/>
            <person name="Lee S.Y."/>
            <person name="Lee K.J."/>
            <person name="Kang H.S."/>
        </authorList>
    </citation>
    <scope>NUCLEOTIDE SEQUENCE [LARGE SCALE GENOMIC DNA]</scope>
    <source>
        <strain>ATCC 31821 / ZM4 / CP4</strain>
    </source>
</reference>
<gene>
    <name evidence="1" type="primary">tyrS</name>
    <name type="ordered locus">ZMO1643</name>
</gene>